<accession>Q9JY99</accession>
<organism>
    <name type="scientific">Neisseria meningitidis serogroup B (strain ATCC BAA-335 / MC58)</name>
    <dbReference type="NCBI Taxonomy" id="122586"/>
    <lineage>
        <taxon>Bacteria</taxon>
        <taxon>Pseudomonadati</taxon>
        <taxon>Pseudomonadota</taxon>
        <taxon>Betaproteobacteria</taxon>
        <taxon>Neisseriales</taxon>
        <taxon>Neisseriaceae</taxon>
        <taxon>Neisseria</taxon>
    </lineage>
</organism>
<keyword id="KW-0028">Amino-acid biosynthesis</keyword>
<keyword id="KW-0057">Aromatic amino acid biosynthesis</keyword>
<keyword id="KW-0274">FAD</keyword>
<keyword id="KW-0285">Flavoprotein</keyword>
<keyword id="KW-0288">FMN</keyword>
<keyword id="KW-0456">Lyase</keyword>
<keyword id="KW-0521">NADP</keyword>
<keyword id="KW-1185">Reference proteome</keyword>
<protein>
    <recommendedName>
        <fullName evidence="1">Chorismate synthase</fullName>
        <shortName evidence="1">CS</shortName>
        <ecNumber evidence="1">4.2.3.5</ecNumber>
    </recommendedName>
    <alternativeName>
        <fullName evidence="1">5-enolpyruvylshikimate-3-phosphate phospholyase</fullName>
    </alternativeName>
</protein>
<evidence type="ECO:0000255" key="1">
    <source>
        <dbReference type="HAMAP-Rule" id="MF_00300"/>
    </source>
</evidence>
<reference key="1">
    <citation type="journal article" date="2000" name="Science">
        <title>Complete genome sequence of Neisseria meningitidis serogroup B strain MC58.</title>
        <authorList>
            <person name="Tettelin H."/>
            <person name="Saunders N.J."/>
            <person name="Heidelberg J.F."/>
            <person name="Jeffries A.C."/>
            <person name="Nelson K.E."/>
            <person name="Eisen J.A."/>
            <person name="Ketchum K.A."/>
            <person name="Hood D.W."/>
            <person name="Peden J.F."/>
            <person name="Dodson R.J."/>
            <person name="Nelson W.C."/>
            <person name="Gwinn M.L."/>
            <person name="DeBoy R.T."/>
            <person name="Peterson J.D."/>
            <person name="Hickey E.K."/>
            <person name="Haft D.H."/>
            <person name="Salzberg S.L."/>
            <person name="White O."/>
            <person name="Fleischmann R.D."/>
            <person name="Dougherty B.A."/>
            <person name="Mason T.M."/>
            <person name="Ciecko A."/>
            <person name="Parksey D.S."/>
            <person name="Blair E."/>
            <person name="Cittone H."/>
            <person name="Clark E.B."/>
            <person name="Cotton M.D."/>
            <person name="Utterback T.R."/>
            <person name="Khouri H.M."/>
            <person name="Qin H."/>
            <person name="Vamathevan J.J."/>
            <person name="Gill J."/>
            <person name="Scarlato V."/>
            <person name="Masignani V."/>
            <person name="Pizza M."/>
            <person name="Grandi G."/>
            <person name="Sun L."/>
            <person name="Smith H.O."/>
            <person name="Fraser C.M."/>
            <person name="Moxon E.R."/>
            <person name="Rappuoli R."/>
            <person name="Venter J.C."/>
        </authorList>
    </citation>
    <scope>NUCLEOTIDE SEQUENCE [LARGE SCALE GENOMIC DNA]</scope>
    <source>
        <strain>ATCC BAA-335 / MC58</strain>
    </source>
</reference>
<gene>
    <name evidence="1" type="primary">aroC</name>
    <name type="ordered locus">NMB1680</name>
</gene>
<dbReference type="EC" id="4.2.3.5" evidence="1"/>
<dbReference type="EMBL" id="AE002098">
    <property type="protein sequence ID" value="AAF42028.1"/>
    <property type="molecule type" value="Genomic_DNA"/>
</dbReference>
<dbReference type="PIR" id="B81055">
    <property type="entry name" value="B81055"/>
</dbReference>
<dbReference type="RefSeq" id="NP_274684.1">
    <property type="nucleotide sequence ID" value="NC_003112.2"/>
</dbReference>
<dbReference type="RefSeq" id="WP_002224985.1">
    <property type="nucleotide sequence ID" value="NC_003112.2"/>
</dbReference>
<dbReference type="SMR" id="Q9JY99"/>
<dbReference type="FunCoup" id="Q9JY99">
    <property type="interactions" value="451"/>
</dbReference>
<dbReference type="STRING" id="122586.NMB1680"/>
<dbReference type="PaxDb" id="122586-NMB1680"/>
<dbReference type="KEGG" id="nme:NMB1680"/>
<dbReference type="PATRIC" id="fig|122586.8.peg.2162"/>
<dbReference type="HOGENOM" id="CLU_034547_0_2_4"/>
<dbReference type="InParanoid" id="Q9JY99"/>
<dbReference type="OrthoDB" id="9771806at2"/>
<dbReference type="UniPathway" id="UPA00053">
    <property type="reaction ID" value="UER00090"/>
</dbReference>
<dbReference type="Proteomes" id="UP000000425">
    <property type="component" value="Chromosome"/>
</dbReference>
<dbReference type="GO" id="GO:0005829">
    <property type="term" value="C:cytosol"/>
    <property type="evidence" value="ECO:0000318"/>
    <property type="project" value="GO_Central"/>
</dbReference>
<dbReference type="GO" id="GO:0004107">
    <property type="term" value="F:chorismate synthase activity"/>
    <property type="evidence" value="ECO:0000318"/>
    <property type="project" value="GO_Central"/>
</dbReference>
<dbReference type="GO" id="GO:0010181">
    <property type="term" value="F:FMN binding"/>
    <property type="evidence" value="ECO:0000318"/>
    <property type="project" value="GO_Central"/>
</dbReference>
<dbReference type="GO" id="GO:0008652">
    <property type="term" value="P:amino acid biosynthetic process"/>
    <property type="evidence" value="ECO:0007669"/>
    <property type="project" value="UniProtKB-KW"/>
</dbReference>
<dbReference type="GO" id="GO:0009073">
    <property type="term" value="P:aromatic amino acid family biosynthetic process"/>
    <property type="evidence" value="ECO:0000318"/>
    <property type="project" value="GO_Central"/>
</dbReference>
<dbReference type="GO" id="GO:0009423">
    <property type="term" value="P:chorismate biosynthetic process"/>
    <property type="evidence" value="ECO:0000318"/>
    <property type="project" value="GO_Central"/>
</dbReference>
<dbReference type="CDD" id="cd07304">
    <property type="entry name" value="Chorismate_synthase"/>
    <property type="match status" value="1"/>
</dbReference>
<dbReference type="FunFam" id="3.60.150.10:FF:000001">
    <property type="entry name" value="Chorismate synthase"/>
    <property type="match status" value="1"/>
</dbReference>
<dbReference type="Gene3D" id="3.60.150.10">
    <property type="entry name" value="Chorismate synthase AroC"/>
    <property type="match status" value="1"/>
</dbReference>
<dbReference type="HAMAP" id="MF_00300">
    <property type="entry name" value="Chorismate_synth"/>
    <property type="match status" value="1"/>
</dbReference>
<dbReference type="InterPro" id="IPR000453">
    <property type="entry name" value="Chorismate_synth"/>
</dbReference>
<dbReference type="InterPro" id="IPR035904">
    <property type="entry name" value="Chorismate_synth_AroC_sf"/>
</dbReference>
<dbReference type="InterPro" id="IPR020541">
    <property type="entry name" value="Chorismate_synthase_CS"/>
</dbReference>
<dbReference type="NCBIfam" id="TIGR00033">
    <property type="entry name" value="aroC"/>
    <property type="match status" value="1"/>
</dbReference>
<dbReference type="NCBIfam" id="NF003793">
    <property type="entry name" value="PRK05382.1"/>
    <property type="match status" value="1"/>
</dbReference>
<dbReference type="PANTHER" id="PTHR21085">
    <property type="entry name" value="CHORISMATE SYNTHASE"/>
    <property type="match status" value="1"/>
</dbReference>
<dbReference type="PANTHER" id="PTHR21085:SF0">
    <property type="entry name" value="CHORISMATE SYNTHASE"/>
    <property type="match status" value="1"/>
</dbReference>
<dbReference type="Pfam" id="PF01264">
    <property type="entry name" value="Chorismate_synt"/>
    <property type="match status" value="1"/>
</dbReference>
<dbReference type="PIRSF" id="PIRSF001456">
    <property type="entry name" value="Chorismate_synth"/>
    <property type="match status" value="1"/>
</dbReference>
<dbReference type="SUPFAM" id="SSF103263">
    <property type="entry name" value="Chorismate synthase, AroC"/>
    <property type="match status" value="1"/>
</dbReference>
<dbReference type="PROSITE" id="PS00787">
    <property type="entry name" value="CHORISMATE_SYNTHASE_1"/>
    <property type="match status" value="1"/>
</dbReference>
<dbReference type="PROSITE" id="PS00788">
    <property type="entry name" value="CHORISMATE_SYNTHASE_2"/>
    <property type="match status" value="1"/>
</dbReference>
<dbReference type="PROSITE" id="PS00789">
    <property type="entry name" value="CHORISMATE_SYNTHASE_3"/>
    <property type="match status" value="1"/>
</dbReference>
<name>AROC_NEIMB</name>
<proteinExistence type="inferred from homology"/>
<feature type="chain" id="PRO_0000140618" description="Chorismate synthase">
    <location>
        <begin position="1"/>
        <end position="366"/>
    </location>
</feature>
<feature type="binding site" evidence="1">
    <location>
        <position position="48"/>
    </location>
    <ligand>
        <name>NADP(+)</name>
        <dbReference type="ChEBI" id="CHEBI:58349"/>
    </ligand>
</feature>
<feature type="binding site" evidence="1">
    <location>
        <position position="54"/>
    </location>
    <ligand>
        <name>NADP(+)</name>
        <dbReference type="ChEBI" id="CHEBI:58349"/>
    </ligand>
</feature>
<feature type="binding site" evidence="1">
    <location>
        <begin position="125"/>
        <end position="127"/>
    </location>
    <ligand>
        <name>FMN</name>
        <dbReference type="ChEBI" id="CHEBI:58210"/>
    </ligand>
</feature>
<feature type="binding site" evidence="1">
    <location>
        <begin position="238"/>
        <end position="239"/>
    </location>
    <ligand>
        <name>FMN</name>
        <dbReference type="ChEBI" id="CHEBI:58210"/>
    </ligand>
</feature>
<feature type="binding site" evidence="1">
    <location>
        <position position="278"/>
    </location>
    <ligand>
        <name>FMN</name>
        <dbReference type="ChEBI" id="CHEBI:58210"/>
    </ligand>
</feature>
<feature type="binding site" evidence="1">
    <location>
        <begin position="293"/>
        <end position="297"/>
    </location>
    <ligand>
        <name>FMN</name>
        <dbReference type="ChEBI" id="CHEBI:58210"/>
    </ligand>
</feature>
<feature type="binding site" evidence="1">
    <location>
        <position position="319"/>
    </location>
    <ligand>
        <name>FMN</name>
        <dbReference type="ChEBI" id="CHEBI:58210"/>
    </ligand>
</feature>
<comment type="function">
    <text evidence="1">Catalyzes the anti-1,4-elimination of the C-3 phosphate and the C-6 proR hydrogen from 5-enolpyruvylshikimate-3-phosphate (EPSP) to yield chorismate, which is the branch point compound that serves as the starting substrate for the three terminal pathways of aromatic amino acid biosynthesis. This reaction introduces a second double bond into the aromatic ring system.</text>
</comment>
<comment type="catalytic activity">
    <reaction evidence="1">
        <text>5-O-(1-carboxyvinyl)-3-phosphoshikimate = chorismate + phosphate</text>
        <dbReference type="Rhea" id="RHEA:21020"/>
        <dbReference type="ChEBI" id="CHEBI:29748"/>
        <dbReference type="ChEBI" id="CHEBI:43474"/>
        <dbReference type="ChEBI" id="CHEBI:57701"/>
        <dbReference type="EC" id="4.2.3.5"/>
    </reaction>
</comment>
<comment type="cofactor">
    <cofactor evidence="1">
        <name>FMNH2</name>
        <dbReference type="ChEBI" id="CHEBI:57618"/>
    </cofactor>
    <text evidence="1">Reduced FMN (FMNH(2)).</text>
</comment>
<comment type="pathway">
    <text evidence="1">Metabolic intermediate biosynthesis; chorismate biosynthesis; chorismate from D-erythrose 4-phosphate and phosphoenolpyruvate: step 7/7.</text>
</comment>
<comment type="subunit">
    <text evidence="1">Homotetramer.</text>
</comment>
<comment type="similarity">
    <text evidence="1">Belongs to the chorismate synthase family.</text>
</comment>
<sequence>MAGNTFGQLFTVTTFGESHGAGLGCIIDGCPPGLELSEADIQFDLDRRKPGTSRHVTQRREADQVEILSGVFEGKTTGTPIALLIRNTDQRSKDYGNIATSFRPGHADYTYWHKYGTRDYRGGGRSSARETAARVAAGAVAKKWLKEKFGTEITAYVTQVGEKEIRFEGCEHISQNPFFAANHSQIAELENYMDSVRKSLDSVGAKLHIEAANVPVGLGEPVFDRLDAEIAYAMMGINAVKGVEIGAGFDSVTQRGSEHGDELTPQGFLSNHSGGILGGISTGQDIRVNIAIKPTSSIATPRRSIDINGNPIELATHGRHDPCVGLRSAPIAEAMLALVLIDHALRHRAQNADVQVNTPDITLSNK</sequence>